<evidence type="ECO:0000255" key="1">
    <source>
        <dbReference type="HAMAP-Rule" id="MF_00211"/>
    </source>
</evidence>
<reference key="1">
    <citation type="submission" date="2008-02" db="EMBL/GenBank/DDBJ databases">
        <title>Complete sequence of chromosome 1 of Burkholderia cenocepacia MC0-3.</title>
        <authorList>
            <person name="Copeland A."/>
            <person name="Lucas S."/>
            <person name="Lapidus A."/>
            <person name="Barry K."/>
            <person name="Bruce D."/>
            <person name="Goodwin L."/>
            <person name="Glavina del Rio T."/>
            <person name="Dalin E."/>
            <person name="Tice H."/>
            <person name="Pitluck S."/>
            <person name="Chain P."/>
            <person name="Malfatti S."/>
            <person name="Shin M."/>
            <person name="Vergez L."/>
            <person name="Schmutz J."/>
            <person name="Larimer F."/>
            <person name="Land M."/>
            <person name="Hauser L."/>
            <person name="Kyrpides N."/>
            <person name="Mikhailova N."/>
            <person name="Tiedje J."/>
            <person name="Richardson P."/>
        </authorList>
    </citation>
    <scope>NUCLEOTIDE SEQUENCE [LARGE SCALE GENOMIC DNA]</scope>
    <source>
        <strain>MC0-3</strain>
    </source>
</reference>
<gene>
    <name evidence="1" type="primary">trpD</name>
    <name type="ordered locus">Bcenmc03_0504</name>
</gene>
<feature type="chain" id="PRO_1000099788" description="Anthranilate phosphoribosyltransferase">
    <location>
        <begin position="1"/>
        <end position="343"/>
    </location>
</feature>
<feature type="binding site" evidence="1">
    <location>
        <position position="84"/>
    </location>
    <ligand>
        <name>5-phospho-alpha-D-ribose 1-diphosphate</name>
        <dbReference type="ChEBI" id="CHEBI:58017"/>
    </ligand>
</feature>
<feature type="binding site" evidence="1">
    <location>
        <position position="84"/>
    </location>
    <ligand>
        <name>anthranilate</name>
        <dbReference type="ChEBI" id="CHEBI:16567"/>
        <label>1</label>
    </ligand>
</feature>
<feature type="binding site" evidence="1">
    <location>
        <begin position="87"/>
        <end position="88"/>
    </location>
    <ligand>
        <name>5-phospho-alpha-D-ribose 1-diphosphate</name>
        <dbReference type="ChEBI" id="CHEBI:58017"/>
    </ligand>
</feature>
<feature type="binding site" evidence="1">
    <location>
        <position position="92"/>
    </location>
    <ligand>
        <name>5-phospho-alpha-D-ribose 1-diphosphate</name>
        <dbReference type="ChEBI" id="CHEBI:58017"/>
    </ligand>
</feature>
<feature type="binding site" evidence="1">
    <location>
        <begin position="94"/>
        <end position="97"/>
    </location>
    <ligand>
        <name>5-phospho-alpha-D-ribose 1-diphosphate</name>
        <dbReference type="ChEBI" id="CHEBI:58017"/>
    </ligand>
</feature>
<feature type="binding site" evidence="1">
    <location>
        <position position="96"/>
    </location>
    <ligand>
        <name>Mg(2+)</name>
        <dbReference type="ChEBI" id="CHEBI:18420"/>
        <label>1</label>
    </ligand>
</feature>
<feature type="binding site" evidence="1">
    <location>
        <begin position="112"/>
        <end position="120"/>
    </location>
    <ligand>
        <name>5-phospho-alpha-D-ribose 1-diphosphate</name>
        <dbReference type="ChEBI" id="CHEBI:58017"/>
    </ligand>
</feature>
<feature type="binding site" evidence="1">
    <location>
        <position position="115"/>
    </location>
    <ligand>
        <name>anthranilate</name>
        <dbReference type="ChEBI" id="CHEBI:16567"/>
        <label>1</label>
    </ligand>
</feature>
<feature type="binding site" evidence="1">
    <location>
        <position position="124"/>
    </location>
    <ligand>
        <name>5-phospho-alpha-D-ribose 1-diphosphate</name>
        <dbReference type="ChEBI" id="CHEBI:58017"/>
    </ligand>
</feature>
<feature type="binding site" evidence="1">
    <location>
        <position position="170"/>
    </location>
    <ligand>
        <name>anthranilate</name>
        <dbReference type="ChEBI" id="CHEBI:16567"/>
        <label>2</label>
    </ligand>
</feature>
<feature type="binding site" evidence="1">
    <location>
        <position position="229"/>
    </location>
    <ligand>
        <name>Mg(2+)</name>
        <dbReference type="ChEBI" id="CHEBI:18420"/>
        <label>2</label>
    </ligand>
</feature>
<feature type="binding site" evidence="1">
    <location>
        <position position="230"/>
    </location>
    <ligand>
        <name>Mg(2+)</name>
        <dbReference type="ChEBI" id="CHEBI:18420"/>
        <label>1</label>
    </ligand>
</feature>
<feature type="binding site" evidence="1">
    <location>
        <position position="230"/>
    </location>
    <ligand>
        <name>Mg(2+)</name>
        <dbReference type="ChEBI" id="CHEBI:18420"/>
        <label>2</label>
    </ligand>
</feature>
<protein>
    <recommendedName>
        <fullName evidence="1">Anthranilate phosphoribosyltransferase</fullName>
        <ecNumber evidence="1">2.4.2.18</ecNumber>
    </recommendedName>
</protein>
<organism>
    <name type="scientific">Burkholderia orbicola (strain MC0-3)</name>
    <dbReference type="NCBI Taxonomy" id="406425"/>
    <lineage>
        <taxon>Bacteria</taxon>
        <taxon>Pseudomonadati</taxon>
        <taxon>Pseudomonadota</taxon>
        <taxon>Betaproteobacteria</taxon>
        <taxon>Burkholderiales</taxon>
        <taxon>Burkholderiaceae</taxon>
        <taxon>Burkholderia</taxon>
        <taxon>Burkholderia cepacia complex</taxon>
        <taxon>Burkholderia orbicola</taxon>
    </lineage>
</organism>
<name>TRPD_BURO0</name>
<sequence length="343" mass="36807">MTITPQEALQRTIEHREIFHDEMLHLMRLIMRGDLSPVMAAAIITGLRVKKETIGEIAAAATVMREFANHVEVQDNSNFVDIVGTGGDGSHTFNISTASMFVTAAAGAKVAKHGNRGVSSKSGSADVLEALGVNIDLQSDQVAASIAETGMGFMFAPNHHPAMKNIAAVRRELGVRTIFNILGPLTNPAGAPNQLMGVFHPDLVGIQVRVMQRLGAQHVLVVYGKDGMDEVSLGAATLVGELRDGKVHEYEIHPEDFGLQMVSNRTLKVENADESRTMLLGALDNQPGVAREIVTLNAGTALYAANIAESIADGIQLAREAIASGKARAKVDELVRFTQQFKR</sequence>
<keyword id="KW-0028">Amino-acid biosynthesis</keyword>
<keyword id="KW-0057">Aromatic amino acid biosynthesis</keyword>
<keyword id="KW-0328">Glycosyltransferase</keyword>
<keyword id="KW-0460">Magnesium</keyword>
<keyword id="KW-0479">Metal-binding</keyword>
<keyword id="KW-0808">Transferase</keyword>
<keyword id="KW-0822">Tryptophan biosynthesis</keyword>
<comment type="function">
    <text evidence="1">Catalyzes the transfer of the phosphoribosyl group of 5-phosphorylribose-1-pyrophosphate (PRPP) to anthranilate to yield N-(5'-phosphoribosyl)-anthranilate (PRA).</text>
</comment>
<comment type="catalytic activity">
    <reaction evidence="1">
        <text>N-(5-phospho-beta-D-ribosyl)anthranilate + diphosphate = 5-phospho-alpha-D-ribose 1-diphosphate + anthranilate</text>
        <dbReference type="Rhea" id="RHEA:11768"/>
        <dbReference type="ChEBI" id="CHEBI:16567"/>
        <dbReference type="ChEBI" id="CHEBI:18277"/>
        <dbReference type="ChEBI" id="CHEBI:33019"/>
        <dbReference type="ChEBI" id="CHEBI:58017"/>
        <dbReference type="EC" id="2.4.2.18"/>
    </reaction>
</comment>
<comment type="cofactor">
    <cofactor evidence="1">
        <name>Mg(2+)</name>
        <dbReference type="ChEBI" id="CHEBI:18420"/>
    </cofactor>
    <text evidence="1">Binds 2 magnesium ions per monomer.</text>
</comment>
<comment type="pathway">
    <text evidence="1">Amino-acid biosynthesis; L-tryptophan biosynthesis; L-tryptophan from chorismate: step 2/5.</text>
</comment>
<comment type="subunit">
    <text evidence="1">Homodimer.</text>
</comment>
<comment type="similarity">
    <text evidence="1">Belongs to the anthranilate phosphoribosyltransferase family.</text>
</comment>
<proteinExistence type="inferred from homology"/>
<accession>B1JUU6</accession>
<dbReference type="EC" id="2.4.2.18" evidence="1"/>
<dbReference type="EMBL" id="CP000958">
    <property type="protein sequence ID" value="ACA89682.1"/>
    <property type="molecule type" value="Genomic_DNA"/>
</dbReference>
<dbReference type="RefSeq" id="WP_012327835.1">
    <property type="nucleotide sequence ID" value="NC_010508.1"/>
</dbReference>
<dbReference type="SMR" id="B1JUU6"/>
<dbReference type="GeneID" id="83047300"/>
<dbReference type="KEGG" id="bcm:Bcenmc03_0504"/>
<dbReference type="HOGENOM" id="CLU_034315_2_1_4"/>
<dbReference type="UniPathway" id="UPA00035">
    <property type="reaction ID" value="UER00041"/>
</dbReference>
<dbReference type="Proteomes" id="UP000002169">
    <property type="component" value="Chromosome 1"/>
</dbReference>
<dbReference type="GO" id="GO:0005829">
    <property type="term" value="C:cytosol"/>
    <property type="evidence" value="ECO:0007669"/>
    <property type="project" value="TreeGrafter"/>
</dbReference>
<dbReference type="GO" id="GO:0004048">
    <property type="term" value="F:anthranilate phosphoribosyltransferase activity"/>
    <property type="evidence" value="ECO:0007669"/>
    <property type="project" value="UniProtKB-UniRule"/>
</dbReference>
<dbReference type="GO" id="GO:0000287">
    <property type="term" value="F:magnesium ion binding"/>
    <property type="evidence" value="ECO:0007669"/>
    <property type="project" value="UniProtKB-UniRule"/>
</dbReference>
<dbReference type="GO" id="GO:0000162">
    <property type="term" value="P:L-tryptophan biosynthetic process"/>
    <property type="evidence" value="ECO:0007669"/>
    <property type="project" value="UniProtKB-UniRule"/>
</dbReference>
<dbReference type="FunFam" id="1.20.970.10:FF:000006">
    <property type="entry name" value="Anthranilate phosphoribosyltransferase"/>
    <property type="match status" value="1"/>
</dbReference>
<dbReference type="FunFam" id="3.40.1030.10:FF:000002">
    <property type="entry name" value="Anthranilate phosphoribosyltransferase"/>
    <property type="match status" value="1"/>
</dbReference>
<dbReference type="Gene3D" id="3.40.1030.10">
    <property type="entry name" value="Nucleoside phosphorylase/phosphoribosyltransferase catalytic domain"/>
    <property type="match status" value="1"/>
</dbReference>
<dbReference type="Gene3D" id="1.20.970.10">
    <property type="entry name" value="Transferase, Pyrimidine Nucleoside Phosphorylase, Chain C"/>
    <property type="match status" value="1"/>
</dbReference>
<dbReference type="HAMAP" id="MF_00211">
    <property type="entry name" value="TrpD"/>
    <property type="match status" value="1"/>
</dbReference>
<dbReference type="InterPro" id="IPR005940">
    <property type="entry name" value="Anthranilate_Pribosyl_Tfrase"/>
</dbReference>
<dbReference type="InterPro" id="IPR000312">
    <property type="entry name" value="Glycosyl_Trfase_fam3"/>
</dbReference>
<dbReference type="InterPro" id="IPR017459">
    <property type="entry name" value="Glycosyl_Trfase_fam3_N_dom"/>
</dbReference>
<dbReference type="InterPro" id="IPR036320">
    <property type="entry name" value="Glycosyl_Trfase_fam3_N_dom_sf"/>
</dbReference>
<dbReference type="InterPro" id="IPR035902">
    <property type="entry name" value="Nuc_phospho_transferase"/>
</dbReference>
<dbReference type="NCBIfam" id="TIGR01245">
    <property type="entry name" value="trpD"/>
    <property type="match status" value="1"/>
</dbReference>
<dbReference type="PANTHER" id="PTHR43285">
    <property type="entry name" value="ANTHRANILATE PHOSPHORIBOSYLTRANSFERASE"/>
    <property type="match status" value="1"/>
</dbReference>
<dbReference type="PANTHER" id="PTHR43285:SF2">
    <property type="entry name" value="ANTHRANILATE PHOSPHORIBOSYLTRANSFERASE"/>
    <property type="match status" value="1"/>
</dbReference>
<dbReference type="Pfam" id="PF02885">
    <property type="entry name" value="Glycos_trans_3N"/>
    <property type="match status" value="1"/>
</dbReference>
<dbReference type="Pfam" id="PF00591">
    <property type="entry name" value="Glycos_transf_3"/>
    <property type="match status" value="1"/>
</dbReference>
<dbReference type="SUPFAM" id="SSF52418">
    <property type="entry name" value="Nucleoside phosphorylase/phosphoribosyltransferase catalytic domain"/>
    <property type="match status" value="1"/>
</dbReference>
<dbReference type="SUPFAM" id="SSF47648">
    <property type="entry name" value="Nucleoside phosphorylase/phosphoribosyltransferase N-terminal domain"/>
    <property type="match status" value="1"/>
</dbReference>